<reference key="1">
    <citation type="journal article" date="2005" name="Genome Biol.">
        <title>Full-length cDNAs from chicken bursal lymphocytes to facilitate gene function analysis.</title>
        <authorList>
            <person name="Caldwell R.B."/>
            <person name="Kierzek A.M."/>
            <person name="Arakawa H."/>
            <person name="Bezzubov Y."/>
            <person name="Zaim J."/>
            <person name="Fiedler P."/>
            <person name="Kutter S."/>
            <person name="Blagodatski A."/>
            <person name="Kostovska D."/>
            <person name="Koter M."/>
            <person name="Plachy J."/>
            <person name="Carninci P."/>
            <person name="Hayashizaki Y."/>
            <person name="Buerstedde J.-M."/>
        </authorList>
    </citation>
    <scope>NUCLEOTIDE SEQUENCE [LARGE SCALE MRNA]</scope>
    <source>
        <strain>CB</strain>
        <tissue>Bursa of Fabricius</tissue>
    </source>
</reference>
<gene>
    <name type="primary">ARL6IP4</name>
    <name type="ORF">RCJMB04_1f2</name>
</gene>
<proteinExistence type="evidence at transcript level"/>
<protein>
    <recommendedName>
        <fullName>ADP-ribosylation factor-like protein 6-interacting protein 4</fullName>
        <shortName>ARL-6-interacting protein 4</shortName>
        <shortName>Aip-4</shortName>
    </recommendedName>
</protein>
<accession>Q5F4A9</accession>
<feature type="chain" id="PRO_0000312273" description="ADP-ribosylation factor-like protein 6-interacting protein 4">
    <location>
        <begin position="1"/>
        <end position="231"/>
    </location>
</feature>
<feature type="region of interest" description="Disordered" evidence="2">
    <location>
        <begin position="1"/>
        <end position="155"/>
    </location>
</feature>
<feature type="compositionally biased region" description="Basic residues" evidence="2">
    <location>
        <begin position="1"/>
        <end position="12"/>
    </location>
</feature>
<feature type="compositionally biased region" description="Basic residues" evidence="2">
    <location>
        <begin position="51"/>
        <end position="62"/>
    </location>
</feature>
<feature type="compositionally biased region" description="Low complexity" evidence="2">
    <location>
        <begin position="63"/>
        <end position="85"/>
    </location>
</feature>
<feature type="compositionally biased region" description="Basic residues" evidence="2">
    <location>
        <begin position="91"/>
        <end position="120"/>
    </location>
</feature>
<dbReference type="EMBL" id="AJ851391">
    <property type="protein sequence ID" value="CAH65025.1"/>
    <property type="molecule type" value="mRNA"/>
</dbReference>
<dbReference type="RefSeq" id="NP_001383543.1">
    <property type="nucleotide sequence ID" value="NM_001396614.1"/>
</dbReference>
<dbReference type="STRING" id="9031.ENSGALP00000005823"/>
<dbReference type="PaxDb" id="9031-ENSGALP00000005823"/>
<dbReference type="Ensembl" id="ENSGALT00010060778.1">
    <property type="protein sequence ID" value="ENSGALP00010037537.1"/>
    <property type="gene ID" value="ENSGALG00010024893.1"/>
</dbReference>
<dbReference type="GeneID" id="427695"/>
<dbReference type="VEuPathDB" id="HostDB:geneid_427695"/>
<dbReference type="eggNOG" id="ENOG502RYBZ">
    <property type="taxonomic scope" value="Eukaryota"/>
</dbReference>
<dbReference type="GeneTree" id="ENSGT00390000009670"/>
<dbReference type="InParanoid" id="Q5F4A9"/>
<dbReference type="OMA" id="WHKSARE"/>
<dbReference type="OrthoDB" id="48562at2759"/>
<dbReference type="PRO" id="PR:Q5F4A9"/>
<dbReference type="Proteomes" id="UP000000539">
    <property type="component" value="Chromosome 15"/>
</dbReference>
<dbReference type="GO" id="GO:0016607">
    <property type="term" value="C:nuclear speck"/>
    <property type="evidence" value="ECO:0007669"/>
    <property type="project" value="UniProtKB-SubCell"/>
</dbReference>
<dbReference type="GO" id="GO:0005730">
    <property type="term" value="C:nucleolus"/>
    <property type="evidence" value="ECO:0007669"/>
    <property type="project" value="UniProtKB-SubCell"/>
</dbReference>
<dbReference type="GO" id="GO:0006397">
    <property type="term" value="P:mRNA processing"/>
    <property type="evidence" value="ECO:0007669"/>
    <property type="project" value="UniProtKB-KW"/>
</dbReference>
<dbReference type="GO" id="GO:0008380">
    <property type="term" value="P:RNA splicing"/>
    <property type="evidence" value="ECO:0007669"/>
    <property type="project" value="UniProtKB-KW"/>
</dbReference>
<dbReference type="InterPro" id="IPR019532">
    <property type="entry name" value="Nucl_RNA-splicing_assoc_SR-25"/>
</dbReference>
<dbReference type="Pfam" id="PF10500">
    <property type="entry name" value="SR-25"/>
    <property type="match status" value="1"/>
</dbReference>
<keyword id="KW-0507">mRNA processing</keyword>
<keyword id="KW-0508">mRNA splicing</keyword>
<keyword id="KW-0539">Nucleus</keyword>
<keyword id="KW-1185">Reference proteome</keyword>
<organism>
    <name type="scientific">Gallus gallus</name>
    <name type="common">Chicken</name>
    <dbReference type="NCBI Taxonomy" id="9031"/>
    <lineage>
        <taxon>Eukaryota</taxon>
        <taxon>Metazoa</taxon>
        <taxon>Chordata</taxon>
        <taxon>Craniata</taxon>
        <taxon>Vertebrata</taxon>
        <taxon>Euteleostomi</taxon>
        <taxon>Archelosauria</taxon>
        <taxon>Archosauria</taxon>
        <taxon>Dinosauria</taxon>
        <taxon>Saurischia</taxon>
        <taxon>Theropoda</taxon>
        <taxon>Coelurosauria</taxon>
        <taxon>Aves</taxon>
        <taxon>Neognathae</taxon>
        <taxon>Galloanserae</taxon>
        <taxon>Galliformes</taxon>
        <taxon>Phasianidae</taxon>
        <taxon>Phasianinae</taxon>
        <taxon>Gallus</taxon>
    </lineage>
</organism>
<evidence type="ECO:0000250" key="1"/>
<evidence type="ECO:0000256" key="2">
    <source>
        <dbReference type="SAM" id="MobiDB-lite"/>
    </source>
</evidence>
<evidence type="ECO:0000305" key="3"/>
<name>AR6P4_CHICK</name>
<sequence length="231" mass="25758">MARGRSRKRSRSSSRSPSGSGREKGGARSSAASPGPRHRLSSAAAREGRKKEGRKKKKRKAKASSSDRSSSSRSSSSSSSTSSSDSDTRAKQHSRRKRGKHKDKKKKKKMKKKLKKKSKERVKEERGVSEALPGPSLELWQKEPLADSGPVLTDEQKSRIQAMKPMTKEEWDARQSVIRRVVDPETGRTRLIKGDGEVLEEIVSKERHKEINKQATRGDGLAFQVRTGMLK</sequence>
<comment type="function">
    <text evidence="1">May be involved in modulating alternative pre-mRNA splicing.</text>
</comment>
<comment type="subcellular location">
    <subcellularLocation>
        <location evidence="1">Nucleus</location>
        <location evidence="1">Nucleolus</location>
    </subcellularLocation>
    <subcellularLocation>
        <location evidence="1">Nucleus speckle</location>
    </subcellularLocation>
</comment>
<comment type="similarity">
    <text evidence="3">Belongs to the ARL6IP4 family.</text>
</comment>